<comment type="function">
    <text evidence="1">Splits dipeptides with a prolyl residue in the C-terminal position.</text>
</comment>
<comment type="catalytic activity">
    <reaction evidence="1">
        <text>Xaa-L-Pro dipeptide + H2O = an L-alpha-amino acid + L-proline</text>
        <dbReference type="Rhea" id="RHEA:76407"/>
        <dbReference type="ChEBI" id="CHEBI:15377"/>
        <dbReference type="ChEBI" id="CHEBI:59869"/>
        <dbReference type="ChEBI" id="CHEBI:60039"/>
        <dbReference type="ChEBI" id="CHEBI:195196"/>
        <dbReference type="EC" id="3.4.13.9"/>
    </reaction>
</comment>
<comment type="cofactor">
    <cofactor evidence="1">
        <name>Mn(2+)</name>
        <dbReference type="ChEBI" id="CHEBI:29035"/>
    </cofactor>
    <text evidence="1">Binds 2 manganese ions per subunit.</text>
</comment>
<comment type="similarity">
    <text evidence="1">Belongs to the peptidase M24B family. Bacterial-type prolidase subfamily.</text>
</comment>
<feature type="chain" id="PRO_1000165226" description="Xaa-Pro dipeptidase">
    <location>
        <begin position="1"/>
        <end position="443"/>
    </location>
</feature>
<feature type="binding site" evidence="1">
    <location>
        <position position="246"/>
    </location>
    <ligand>
        <name>Mn(2+)</name>
        <dbReference type="ChEBI" id="CHEBI:29035"/>
        <label>2</label>
    </ligand>
</feature>
<feature type="binding site" evidence="1">
    <location>
        <position position="257"/>
    </location>
    <ligand>
        <name>Mn(2+)</name>
        <dbReference type="ChEBI" id="CHEBI:29035"/>
        <label>1</label>
    </ligand>
</feature>
<feature type="binding site" evidence="1">
    <location>
        <position position="257"/>
    </location>
    <ligand>
        <name>Mn(2+)</name>
        <dbReference type="ChEBI" id="CHEBI:29035"/>
        <label>2</label>
    </ligand>
</feature>
<feature type="binding site" evidence="1">
    <location>
        <position position="339"/>
    </location>
    <ligand>
        <name>Mn(2+)</name>
        <dbReference type="ChEBI" id="CHEBI:29035"/>
        <label>1</label>
    </ligand>
</feature>
<feature type="binding site" evidence="1">
    <location>
        <position position="384"/>
    </location>
    <ligand>
        <name>Mn(2+)</name>
        <dbReference type="ChEBI" id="CHEBI:29035"/>
        <label>1</label>
    </ligand>
</feature>
<feature type="binding site" evidence="1">
    <location>
        <position position="423"/>
    </location>
    <ligand>
        <name>Mn(2+)</name>
        <dbReference type="ChEBI" id="CHEBI:29035"/>
        <label>1</label>
    </ligand>
</feature>
<feature type="binding site" evidence="1">
    <location>
        <position position="423"/>
    </location>
    <ligand>
        <name>Mn(2+)</name>
        <dbReference type="ChEBI" id="CHEBI:29035"/>
        <label>2</label>
    </ligand>
</feature>
<name>PEPQ_ECO55</name>
<proteinExistence type="inferred from homology"/>
<accession>B7L9A5</accession>
<sequence>MESLASLYKNHIATLQERTRDALARFKLDALLIHSGELFNVFLDDHPYPFKVNPQFKAWVPVTQVPNCWLLVDGVNKPKLWFYLPVDYWHNVEPLPTSFWTEDVEVIALPKADGIGSLLPAARGNIGYIGPVPERALQLGIEASNINPKGVIDYLHYYRSFKTEYELACMREAQKMAVNGHRAAEEAFRSGMSEFDINIAYLTATGHRDTDVPYSNIVALNEHAAVLHYTKLDHQAPEEMRSFLLDAGAEYNGYAADLTRTWSAKSDNDYAQLVKDVNDEQLALIATMKAGVSYVDYHIQFHQRIAKLLRKHQIITDMSEEAMVENDLTGPFMPHGIGHPLGLQVHDVAGFMQDDSGTHLAAPAKYPYLRCTRILQPGMVLTIEPGIYFIESLLAPWREGQFSKHFNWQKIEALKPFGGIRIEDNVVIHENNVENMTRDLKLA</sequence>
<gene>
    <name evidence="1" type="primary">pepQ</name>
    <name type="ordered locus">EC55989_4322</name>
</gene>
<protein>
    <recommendedName>
        <fullName evidence="1">Xaa-Pro dipeptidase</fullName>
        <shortName evidence="1">X-Pro dipeptidase</shortName>
        <ecNumber evidence="1">3.4.13.9</ecNumber>
    </recommendedName>
    <alternativeName>
        <fullName evidence="1">Imidodipeptidase</fullName>
    </alternativeName>
    <alternativeName>
        <fullName evidence="1">Proline dipeptidase</fullName>
        <shortName evidence="1">Prolidase</shortName>
    </alternativeName>
</protein>
<reference key="1">
    <citation type="journal article" date="2009" name="PLoS Genet.">
        <title>Organised genome dynamics in the Escherichia coli species results in highly diverse adaptive paths.</title>
        <authorList>
            <person name="Touchon M."/>
            <person name="Hoede C."/>
            <person name="Tenaillon O."/>
            <person name="Barbe V."/>
            <person name="Baeriswyl S."/>
            <person name="Bidet P."/>
            <person name="Bingen E."/>
            <person name="Bonacorsi S."/>
            <person name="Bouchier C."/>
            <person name="Bouvet O."/>
            <person name="Calteau A."/>
            <person name="Chiapello H."/>
            <person name="Clermont O."/>
            <person name="Cruveiller S."/>
            <person name="Danchin A."/>
            <person name="Diard M."/>
            <person name="Dossat C."/>
            <person name="Karoui M.E."/>
            <person name="Frapy E."/>
            <person name="Garry L."/>
            <person name="Ghigo J.M."/>
            <person name="Gilles A.M."/>
            <person name="Johnson J."/>
            <person name="Le Bouguenec C."/>
            <person name="Lescat M."/>
            <person name="Mangenot S."/>
            <person name="Martinez-Jehanne V."/>
            <person name="Matic I."/>
            <person name="Nassif X."/>
            <person name="Oztas S."/>
            <person name="Petit M.A."/>
            <person name="Pichon C."/>
            <person name="Rouy Z."/>
            <person name="Ruf C.S."/>
            <person name="Schneider D."/>
            <person name="Tourret J."/>
            <person name="Vacherie B."/>
            <person name="Vallenet D."/>
            <person name="Medigue C."/>
            <person name="Rocha E.P.C."/>
            <person name="Denamur E."/>
        </authorList>
    </citation>
    <scope>NUCLEOTIDE SEQUENCE [LARGE SCALE GENOMIC DNA]</scope>
    <source>
        <strain>55989 / EAEC</strain>
    </source>
</reference>
<keyword id="KW-0224">Dipeptidase</keyword>
<keyword id="KW-0378">Hydrolase</keyword>
<keyword id="KW-0464">Manganese</keyword>
<keyword id="KW-0479">Metal-binding</keyword>
<keyword id="KW-0482">Metalloprotease</keyword>
<keyword id="KW-0645">Protease</keyword>
<keyword id="KW-1185">Reference proteome</keyword>
<organism>
    <name type="scientific">Escherichia coli (strain 55989 / EAEC)</name>
    <dbReference type="NCBI Taxonomy" id="585055"/>
    <lineage>
        <taxon>Bacteria</taxon>
        <taxon>Pseudomonadati</taxon>
        <taxon>Pseudomonadota</taxon>
        <taxon>Gammaproteobacteria</taxon>
        <taxon>Enterobacterales</taxon>
        <taxon>Enterobacteriaceae</taxon>
        <taxon>Escherichia</taxon>
    </lineage>
</organism>
<evidence type="ECO:0000255" key="1">
    <source>
        <dbReference type="HAMAP-Rule" id="MF_01279"/>
    </source>
</evidence>
<dbReference type="EC" id="3.4.13.9" evidence="1"/>
<dbReference type="EMBL" id="CU928145">
    <property type="protein sequence ID" value="CAV01001.1"/>
    <property type="molecule type" value="Genomic_DNA"/>
</dbReference>
<dbReference type="RefSeq" id="WP_000444561.1">
    <property type="nucleotide sequence ID" value="NZ_CP028304.1"/>
</dbReference>
<dbReference type="SMR" id="B7L9A5"/>
<dbReference type="MEROPS" id="M24.003"/>
<dbReference type="GeneID" id="86861950"/>
<dbReference type="KEGG" id="eck:EC55989_4322"/>
<dbReference type="HOGENOM" id="CLU_050675_0_0_6"/>
<dbReference type="Proteomes" id="UP000000746">
    <property type="component" value="Chromosome"/>
</dbReference>
<dbReference type="GO" id="GO:0005829">
    <property type="term" value="C:cytosol"/>
    <property type="evidence" value="ECO:0007669"/>
    <property type="project" value="TreeGrafter"/>
</dbReference>
<dbReference type="GO" id="GO:0004177">
    <property type="term" value="F:aminopeptidase activity"/>
    <property type="evidence" value="ECO:0007669"/>
    <property type="project" value="TreeGrafter"/>
</dbReference>
<dbReference type="GO" id="GO:0046872">
    <property type="term" value="F:metal ion binding"/>
    <property type="evidence" value="ECO:0007669"/>
    <property type="project" value="UniProtKB-KW"/>
</dbReference>
<dbReference type="GO" id="GO:0008235">
    <property type="term" value="F:metalloexopeptidase activity"/>
    <property type="evidence" value="ECO:0007669"/>
    <property type="project" value="UniProtKB-UniRule"/>
</dbReference>
<dbReference type="GO" id="GO:0016795">
    <property type="term" value="F:phosphoric triester hydrolase activity"/>
    <property type="evidence" value="ECO:0007669"/>
    <property type="project" value="InterPro"/>
</dbReference>
<dbReference type="GO" id="GO:0102009">
    <property type="term" value="F:proline dipeptidase activity"/>
    <property type="evidence" value="ECO:0007669"/>
    <property type="project" value="UniProtKB-EC"/>
</dbReference>
<dbReference type="GO" id="GO:0006508">
    <property type="term" value="P:proteolysis"/>
    <property type="evidence" value="ECO:0007669"/>
    <property type="project" value="UniProtKB-KW"/>
</dbReference>
<dbReference type="CDD" id="cd01087">
    <property type="entry name" value="Prolidase"/>
    <property type="match status" value="1"/>
</dbReference>
<dbReference type="FunFam" id="3.40.350.10:FF:000002">
    <property type="entry name" value="Xaa-Pro dipeptidase"/>
    <property type="match status" value="1"/>
</dbReference>
<dbReference type="FunFam" id="3.90.230.10:FF:000006">
    <property type="entry name" value="Xaa-Pro dipeptidase"/>
    <property type="match status" value="1"/>
</dbReference>
<dbReference type="Gene3D" id="3.90.230.10">
    <property type="entry name" value="Creatinase/methionine aminopeptidase superfamily"/>
    <property type="match status" value="1"/>
</dbReference>
<dbReference type="Gene3D" id="3.40.350.10">
    <property type="entry name" value="Creatinase/prolidase N-terminal domain"/>
    <property type="match status" value="1"/>
</dbReference>
<dbReference type="HAMAP" id="MF_01279">
    <property type="entry name" value="X_Pro_dipeptid"/>
    <property type="match status" value="1"/>
</dbReference>
<dbReference type="InterPro" id="IPR029149">
    <property type="entry name" value="Creatin/AminoP/Spt16_N"/>
</dbReference>
<dbReference type="InterPro" id="IPR036005">
    <property type="entry name" value="Creatinase/aminopeptidase-like"/>
</dbReference>
<dbReference type="InterPro" id="IPR048819">
    <property type="entry name" value="PepQ_N"/>
</dbReference>
<dbReference type="InterPro" id="IPR000994">
    <property type="entry name" value="Pept_M24"/>
</dbReference>
<dbReference type="InterPro" id="IPR001131">
    <property type="entry name" value="Peptidase_M24B_aminopep-P_CS"/>
</dbReference>
<dbReference type="InterPro" id="IPR052433">
    <property type="entry name" value="X-Pro_dipept-like"/>
</dbReference>
<dbReference type="InterPro" id="IPR022846">
    <property type="entry name" value="X_Pro_dipept"/>
</dbReference>
<dbReference type="NCBIfam" id="NF010133">
    <property type="entry name" value="PRK13607.1"/>
    <property type="match status" value="1"/>
</dbReference>
<dbReference type="PANTHER" id="PTHR43226">
    <property type="entry name" value="XAA-PRO AMINOPEPTIDASE 3"/>
    <property type="match status" value="1"/>
</dbReference>
<dbReference type="PANTHER" id="PTHR43226:SF8">
    <property type="entry name" value="XAA-PRO DIPEPTIDASE"/>
    <property type="match status" value="1"/>
</dbReference>
<dbReference type="Pfam" id="PF21216">
    <property type="entry name" value="PepQ_N"/>
    <property type="match status" value="1"/>
</dbReference>
<dbReference type="Pfam" id="PF00557">
    <property type="entry name" value="Peptidase_M24"/>
    <property type="match status" value="1"/>
</dbReference>
<dbReference type="SUPFAM" id="SSF55920">
    <property type="entry name" value="Creatinase/aminopeptidase"/>
    <property type="match status" value="1"/>
</dbReference>
<dbReference type="PROSITE" id="PS00491">
    <property type="entry name" value="PROLINE_PEPTIDASE"/>
    <property type="match status" value="1"/>
</dbReference>